<name>RMT2_DEBHA</name>
<comment type="function">
    <text evidence="1">S-adenosyl-L-methionine-dependent protein-arginine N-methyltransferase that methylates the delta-nitrogen atom of arginine residues to form N5-methylarginine (type IV) in target proteins. Monomethylates ribosomal protein L12.</text>
</comment>
<comment type="subunit">
    <text evidence="1">Monomer.</text>
</comment>
<comment type="subcellular location">
    <subcellularLocation>
        <location evidence="1">Cytoplasm</location>
    </subcellularLocation>
    <subcellularLocation>
        <location evidence="1">Nucleus</location>
    </subcellularLocation>
</comment>
<comment type="similarity">
    <text evidence="2">Belongs to the class I-like SAM-binding methyltransferase superfamily. RMT2 methyltransferase family.</text>
</comment>
<reference key="1">
    <citation type="journal article" date="2004" name="Nature">
        <title>Genome evolution in yeasts.</title>
        <authorList>
            <person name="Dujon B."/>
            <person name="Sherman D."/>
            <person name="Fischer G."/>
            <person name="Durrens P."/>
            <person name="Casaregola S."/>
            <person name="Lafontaine I."/>
            <person name="de Montigny J."/>
            <person name="Marck C."/>
            <person name="Neuveglise C."/>
            <person name="Talla E."/>
            <person name="Goffard N."/>
            <person name="Frangeul L."/>
            <person name="Aigle M."/>
            <person name="Anthouard V."/>
            <person name="Babour A."/>
            <person name="Barbe V."/>
            <person name="Barnay S."/>
            <person name="Blanchin S."/>
            <person name="Beckerich J.-M."/>
            <person name="Beyne E."/>
            <person name="Bleykasten C."/>
            <person name="Boisrame A."/>
            <person name="Boyer J."/>
            <person name="Cattolico L."/>
            <person name="Confanioleri F."/>
            <person name="de Daruvar A."/>
            <person name="Despons L."/>
            <person name="Fabre E."/>
            <person name="Fairhead C."/>
            <person name="Ferry-Dumazet H."/>
            <person name="Groppi A."/>
            <person name="Hantraye F."/>
            <person name="Hennequin C."/>
            <person name="Jauniaux N."/>
            <person name="Joyet P."/>
            <person name="Kachouri R."/>
            <person name="Kerrest A."/>
            <person name="Koszul R."/>
            <person name="Lemaire M."/>
            <person name="Lesur I."/>
            <person name="Ma L."/>
            <person name="Muller H."/>
            <person name="Nicaud J.-M."/>
            <person name="Nikolski M."/>
            <person name="Oztas S."/>
            <person name="Ozier-Kalogeropoulos O."/>
            <person name="Pellenz S."/>
            <person name="Potier S."/>
            <person name="Richard G.-F."/>
            <person name="Straub M.-L."/>
            <person name="Suleau A."/>
            <person name="Swennen D."/>
            <person name="Tekaia F."/>
            <person name="Wesolowski-Louvel M."/>
            <person name="Westhof E."/>
            <person name="Wirth B."/>
            <person name="Zeniou-Meyer M."/>
            <person name="Zivanovic Y."/>
            <person name="Bolotin-Fukuhara M."/>
            <person name="Thierry A."/>
            <person name="Bouchier C."/>
            <person name="Caudron B."/>
            <person name="Scarpelli C."/>
            <person name="Gaillardin C."/>
            <person name="Weissenbach J."/>
            <person name="Wincker P."/>
            <person name="Souciet J.-L."/>
        </authorList>
    </citation>
    <scope>NUCLEOTIDE SEQUENCE [LARGE SCALE GENOMIC DNA]</scope>
    <source>
        <strain>ATCC 36239 / CBS 767 / BCRC 21394 / JCM 1990 / NBRC 0083 / IGC 2968</strain>
    </source>
</reference>
<evidence type="ECO:0000250" key="1">
    <source>
        <dbReference type="UniProtKB" id="Q03305"/>
    </source>
</evidence>
<evidence type="ECO:0000255" key="2">
    <source>
        <dbReference type="PROSITE-ProRule" id="PRU00892"/>
    </source>
</evidence>
<evidence type="ECO:0000256" key="3">
    <source>
        <dbReference type="SAM" id="MobiDB-lite"/>
    </source>
</evidence>
<accession>Q6BNS9</accession>
<protein>
    <recommendedName>
        <fullName evidence="1">Protein arginine N-methyltransferase 2</fullName>
        <ecNumber evidence="1">2.1.1.-</ecNumber>
    </recommendedName>
    <alternativeName>
        <fullName evidence="1">Protein-arginine N5-methyltransferase</fullName>
    </alternativeName>
    <alternativeName>
        <fullName evidence="1">Type IV protein arginine N-methyltransferase</fullName>
        <shortName evidence="1">Type IV PRMT</shortName>
    </alternativeName>
</protein>
<keyword id="KW-0963">Cytoplasm</keyword>
<keyword id="KW-0489">Methyltransferase</keyword>
<keyword id="KW-0539">Nucleus</keyword>
<keyword id="KW-1185">Reference proteome</keyword>
<keyword id="KW-0949">S-adenosyl-L-methionine</keyword>
<keyword id="KW-0808">Transferase</keyword>
<dbReference type="EC" id="2.1.1.-" evidence="1"/>
<dbReference type="EMBL" id="CR382137">
    <property type="protein sequence ID" value="CAG88414.1"/>
    <property type="molecule type" value="Genomic_DNA"/>
</dbReference>
<dbReference type="RefSeq" id="XP_460141.1">
    <property type="nucleotide sequence ID" value="XM_460141.1"/>
</dbReference>
<dbReference type="SMR" id="Q6BNS9"/>
<dbReference type="FunCoup" id="Q6BNS9">
    <property type="interactions" value="416"/>
</dbReference>
<dbReference type="STRING" id="284592.Q6BNS9"/>
<dbReference type="GeneID" id="2902891"/>
<dbReference type="KEGG" id="dha:DEHA2E19228g"/>
<dbReference type="VEuPathDB" id="FungiDB:DEHA2E19228g"/>
<dbReference type="eggNOG" id="KOG1709">
    <property type="taxonomic scope" value="Eukaryota"/>
</dbReference>
<dbReference type="HOGENOM" id="CLU_033831_0_0_1"/>
<dbReference type="InParanoid" id="Q6BNS9"/>
<dbReference type="OMA" id="YWVVDNY"/>
<dbReference type="OrthoDB" id="19014at2759"/>
<dbReference type="Proteomes" id="UP000000599">
    <property type="component" value="Chromosome E"/>
</dbReference>
<dbReference type="GO" id="GO:0005737">
    <property type="term" value="C:cytoplasm"/>
    <property type="evidence" value="ECO:0007669"/>
    <property type="project" value="UniProtKB-SubCell"/>
</dbReference>
<dbReference type="GO" id="GO:0005634">
    <property type="term" value="C:nucleus"/>
    <property type="evidence" value="ECO:0007669"/>
    <property type="project" value="UniProtKB-SubCell"/>
</dbReference>
<dbReference type="GO" id="GO:0019702">
    <property type="term" value="F:protein arginine N5-methyltransferase activity"/>
    <property type="evidence" value="ECO:0007669"/>
    <property type="project" value="EnsemblFungi"/>
</dbReference>
<dbReference type="GO" id="GO:0032259">
    <property type="term" value="P:methylation"/>
    <property type="evidence" value="ECO:0007669"/>
    <property type="project" value="UniProtKB-KW"/>
</dbReference>
<dbReference type="FunFam" id="3.40.50.150:FF:000310">
    <property type="entry name" value="Arginine N-methyltransferase 2"/>
    <property type="match status" value="1"/>
</dbReference>
<dbReference type="Gene3D" id="3.40.50.150">
    <property type="entry name" value="Vaccinia Virus protein VP39"/>
    <property type="match status" value="1"/>
</dbReference>
<dbReference type="InterPro" id="IPR017408">
    <property type="entry name" value="Arginine_N-MeTrfase_2"/>
</dbReference>
<dbReference type="InterPro" id="IPR051038">
    <property type="entry name" value="RMT2/GAMT_Mtase"/>
</dbReference>
<dbReference type="InterPro" id="IPR026480">
    <property type="entry name" value="RMT2_dom"/>
</dbReference>
<dbReference type="InterPro" id="IPR029063">
    <property type="entry name" value="SAM-dependent_MTases_sf"/>
</dbReference>
<dbReference type="PANTHER" id="PTHR32379">
    <property type="entry name" value="GUANIDINOACETATE N-METHYLTRANSFERASE"/>
    <property type="match status" value="1"/>
</dbReference>
<dbReference type="PANTHER" id="PTHR32379:SF1">
    <property type="entry name" value="GUANIDINOACETATE N-METHYLTRANSFERASE"/>
    <property type="match status" value="1"/>
</dbReference>
<dbReference type="PIRSF" id="PIRSF038148">
    <property type="entry name" value="Arginine_N-mtfrase-2"/>
    <property type="match status" value="1"/>
</dbReference>
<dbReference type="SUPFAM" id="SSF53335">
    <property type="entry name" value="S-adenosyl-L-methionine-dependent methyltransferases"/>
    <property type="match status" value="1"/>
</dbReference>
<dbReference type="PROSITE" id="PS51559">
    <property type="entry name" value="SAM_RMT2"/>
    <property type="match status" value="1"/>
</dbReference>
<gene>
    <name evidence="1" type="primary">RMT2</name>
    <name type="ordered locus">DEHA2E19228g</name>
</gene>
<organism>
    <name type="scientific">Debaryomyces hansenii (strain ATCC 36239 / CBS 767 / BCRC 21394 / JCM 1990 / NBRC 0083 / IGC 2968)</name>
    <name type="common">Yeast</name>
    <name type="synonym">Torulaspora hansenii</name>
    <dbReference type="NCBI Taxonomy" id="284592"/>
    <lineage>
        <taxon>Eukaryota</taxon>
        <taxon>Fungi</taxon>
        <taxon>Dikarya</taxon>
        <taxon>Ascomycota</taxon>
        <taxon>Saccharomycotina</taxon>
        <taxon>Pichiomycetes</taxon>
        <taxon>Debaryomycetaceae</taxon>
        <taxon>Debaryomyces</taxon>
    </lineage>
</organism>
<feature type="chain" id="PRO_0000228974" description="Protein arginine N-methyltransferase 2">
    <location>
        <begin position="1"/>
        <end position="434"/>
    </location>
</feature>
<feature type="domain" description="RMT2" evidence="2">
    <location>
        <begin position="193"/>
        <end position="434"/>
    </location>
</feature>
<feature type="region of interest" description="Disordered" evidence="3">
    <location>
        <begin position="155"/>
        <end position="198"/>
    </location>
</feature>
<feature type="compositionally biased region" description="Basic and acidic residues" evidence="3">
    <location>
        <begin position="178"/>
        <end position="193"/>
    </location>
</feature>
<feature type="binding site" evidence="2">
    <location>
        <position position="200"/>
    </location>
    <ligand>
        <name>S-adenosyl-L-methionine</name>
        <dbReference type="ChEBI" id="CHEBI:59789"/>
    </ligand>
</feature>
<feature type="binding site" evidence="2">
    <location>
        <position position="230"/>
    </location>
    <ligand>
        <name>S-adenosyl-L-methionine</name>
        <dbReference type="ChEBI" id="CHEBI:59789"/>
    </ligand>
</feature>
<feature type="binding site" evidence="2">
    <location>
        <begin position="258"/>
        <end position="263"/>
    </location>
    <ligand>
        <name>S-adenosyl-L-methionine</name>
        <dbReference type="ChEBI" id="CHEBI:59789"/>
    </ligand>
</feature>
<feature type="binding site" evidence="2">
    <location>
        <begin position="279"/>
        <end position="281"/>
    </location>
    <ligand>
        <name>S-adenosyl-L-methionine</name>
        <dbReference type="ChEBI" id="CHEBI:59789"/>
    </ligand>
</feature>
<feature type="binding site" evidence="2">
    <location>
        <begin position="306"/>
        <end position="307"/>
    </location>
    <ligand>
        <name>S-adenosyl-L-methionine</name>
        <dbReference type="ChEBI" id="CHEBI:59789"/>
    </ligand>
</feature>
<feature type="binding site" evidence="2">
    <location>
        <position position="327"/>
    </location>
    <ligand>
        <name>S-adenosyl-L-methionine</name>
        <dbReference type="ChEBI" id="CHEBI:59789"/>
    </ligand>
</feature>
<proteinExistence type="inferred from homology"/>
<sequence length="434" mass="50020">MSDLHELCGFQTRPIGPKYIEDLKFYLKNGIPATYTIEEAYNYTNNIEEEPTTTTTPLHIICSHIPNDASNDEIDIINQMVEILLEYGAGWCLTDINDDTPGCILIRRKLNNTPIYNQVVAAGVRAELLLRKVSEYDMEIIEDTDDLNHEQFEGIQGEETTEEERKEEEPSNTSDIIDEQKVEQPKEDLKEDPSSNQETYLKTKLEYKDGALVTKDRKDGVMMSWETDLMRMGCDSLFKGASIDGEIDDEVNILNIGFGMGIIDTMINNKNPTKQYICEAHPDVLAKLRLDGWYEKQNVVILEGRWQEQLNKLLSEGNVFFNGIYYDTYSEHYEDMLELFDIVVGILKPHGVFSFFNGLGADRQVVYEVYKQLVEMDLANYGLICKFEQIEVPESTLQLEVQNSTDNKSVWDDIKRAYWTCPTYYHPEARFMDV</sequence>